<accession>Q6FYU5</accession>
<proteinExistence type="inferred from homology"/>
<feature type="chain" id="PRO_0000136112" description="Histidine--tRNA ligase">
    <location>
        <begin position="1"/>
        <end position="498"/>
    </location>
</feature>
<sequence>MSSKQEKTKARLPRGFIDRTSAQLYATETMIAQIREVYELYGFEALETPIFEYTDVLGKFLPDEDRPNAGVFSLQDEDEQWMSLRYDLTAPLARYFAENFEILPKPYRSYRLGFVFRNEKPGPGRFRQFMQFDADIVGTPTVAADAEICMMAADSLEKLGFQHHDYVIRLNNRKILEAVLEQIGLVGREKAEKRLTVLRAIDKLDKFGLEGVRLLLGKGRLDESGDFTKGAQLKDQEIDSVLALLTGEAETAEETLDALRHVVGHHIQGLEGVRELEEMQAIFAANGYQNRIKIDPSVVRGLEYYTGPVFEATLLFDVLNDDGQKVVFGSIGGGGRYDGLVARFRGENVPATGFSIGISRLITALQNLSKLPVKKTPGPVVVLMMDREPEAVAQYQKMVMQLRKAGIRAELYLGASGIKAQMKYADRRQAPCVVIQGSQERQDRKIQIKDLIEGTRLSREIKDNQTWRESRPAQITVDEERLVQAVQDILISQNAQKF</sequence>
<gene>
    <name evidence="1" type="primary">hisS</name>
    <name type="ordered locus">BQ10830</name>
</gene>
<name>SYH_BARQU</name>
<comment type="catalytic activity">
    <reaction evidence="1">
        <text>tRNA(His) + L-histidine + ATP = L-histidyl-tRNA(His) + AMP + diphosphate + H(+)</text>
        <dbReference type="Rhea" id="RHEA:17313"/>
        <dbReference type="Rhea" id="RHEA-COMP:9665"/>
        <dbReference type="Rhea" id="RHEA-COMP:9689"/>
        <dbReference type="ChEBI" id="CHEBI:15378"/>
        <dbReference type="ChEBI" id="CHEBI:30616"/>
        <dbReference type="ChEBI" id="CHEBI:33019"/>
        <dbReference type="ChEBI" id="CHEBI:57595"/>
        <dbReference type="ChEBI" id="CHEBI:78442"/>
        <dbReference type="ChEBI" id="CHEBI:78527"/>
        <dbReference type="ChEBI" id="CHEBI:456215"/>
        <dbReference type="EC" id="6.1.1.21"/>
    </reaction>
</comment>
<comment type="subunit">
    <text evidence="1">Homodimer.</text>
</comment>
<comment type="subcellular location">
    <subcellularLocation>
        <location evidence="1">Cytoplasm</location>
    </subcellularLocation>
</comment>
<comment type="similarity">
    <text evidence="1">Belongs to the class-II aminoacyl-tRNA synthetase family.</text>
</comment>
<keyword id="KW-0030">Aminoacyl-tRNA synthetase</keyword>
<keyword id="KW-0067">ATP-binding</keyword>
<keyword id="KW-0963">Cytoplasm</keyword>
<keyword id="KW-0436">Ligase</keyword>
<keyword id="KW-0547">Nucleotide-binding</keyword>
<keyword id="KW-0648">Protein biosynthesis</keyword>
<dbReference type="EC" id="6.1.1.21" evidence="1"/>
<dbReference type="EMBL" id="BX897700">
    <property type="protein sequence ID" value="CAF26550.1"/>
    <property type="molecule type" value="Genomic_DNA"/>
</dbReference>
<dbReference type="RefSeq" id="WP_011179747.1">
    <property type="nucleotide sequence ID" value="NC_005955.1"/>
</dbReference>
<dbReference type="SMR" id="Q6FYU5"/>
<dbReference type="KEGG" id="bqu:BQ10830"/>
<dbReference type="eggNOG" id="COG0124">
    <property type="taxonomic scope" value="Bacteria"/>
</dbReference>
<dbReference type="HOGENOM" id="CLU_025113_3_2_5"/>
<dbReference type="OrthoDB" id="9800814at2"/>
<dbReference type="Proteomes" id="UP000000597">
    <property type="component" value="Chromosome"/>
</dbReference>
<dbReference type="GO" id="GO:0005737">
    <property type="term" value="C:cytoplasm"/>
    <property type="evidence" value="ECO:0007669"/>
    <property type="project" value="UniProtKB-SubCell"/>
</dbReference>
<dbReference type="GO" id="GO:0005524">
    <property type="term" value="F:ATP binding"/>
    <property type="evidence" value="ECO:0007669"/>
    <property type="project" value="UniProtKB-UniRule"/>
</dbReference>
<dbReference type="GO" id="GO:0004821">
    <property type="term" value="F:histidine-tRNA ligase activity"/>
    <property type="evidence" value="ECO:0007669"/>
    <property type="project" value="UniProtKB-UniRule"/>
</dbReference>
<dbReference type="GO" id="GO:0006427">
    <property type="term" value="P:histidyl-tRNA aminoacylation"/>
    <property type="evidence" value="ECO:0007669"/>
    <property type="project" value="UniProtKB-UniRule"/>
</dbReference>
<dbReference type="CDD" id="cd00773">
    <property type="entry name" value="HisRS-like_core"/>
    <property type="match status" value="1"/>
</dbReference>
<dbReference type="CDD" id="cd00859">
    <property type="entry name" value="HisRS_anticodon"/>
    <property type="match status" value="1"/>
</dbReference>
<dbReference type="Gene3D" id="3.40.50.800">
    <property type="entry name" value="Anticodon-binding domain"/>
    <property type="match status" value="1"/>
</dbReference>
<dbReference type="Gene3D" id="3.30.930.10">
    <property type="entry name" value="Bira Bifunctional Protein, Domain 2"/>
    <property type="match status" value="1"/>
</dbReference>
<dbReference type="HAMAP" id="MF_00127">
    <property type="entry name" value="His_tRNA_synth"/>
    <property type="match status" value="1"/>
</dbReference>
<dbReference type="InterPro" id="IPR006195">
    <property type="entry name" value="aa-tRNA-synth_II"/>
</dbReference>
<dbReference type="InterPro" id="IPR045864">
    <property type="entry name" value="aa-tRNA-synth_II/BPL/LPL"/>
</dbReference>
<dbReference type="InterPro" id="IPR004154">
    <property type="entry name" value="Anticodon-bd"/>
</dbReference>
<dbReference type="InterPro" id="IPR036621">
    <property type="entry name" value="Anticodon-bd_dom_sf"/>
</dbReference>
<dbReference type="InterPro" id="IPR015807">
    <property type="entry name" value="His-tRNA-ligase"/>
</dbReference>
<dbReference type="InterPro" id="IPR041715">
    <property type="entry name" value="HisRS-like_core"/>
</dbReference>
<dbReference type="InterPro" id="IPR004516">
    <property type="entry name" value="HisRS/HisZ"/>
</dbReference>
<dbReference type="InterPro" id="IPR033656">
    <property type="entry name" value="HisRS_anticodon"/>
</dbReference>
<dbReference type="NCBIfam" id="TIGR00442">
    <property type="entry name" value="hisS"/>
    <property type="match status" value="1"/>
</dbReference>
<dbReference type="PANTHER" id="PTHR11476:SF7">
    <property type="entry name" value="HISTIDINE--TRNA LIGASE"/>
    <property type="match status" value="1"/>
</dbReference>
<dbReference type="PANTHER" id="PTHR11476">
    <property type="entry name" value="HISTIDYL-TRNA SYNTHETASE"/>
    <property type="match status" value="1"/>
</dbReference>
<dbReference type="Pfam" id="PF03129">
    <property type="entry name" value="HGTP_anticodon"/>
    <property type="match status" value="1"/>
</dbReference>
<dbReference type="Pfam" id="PF13393">
    <property type="entry name" value="tRNA-synt_His"/>
    <property type="match status" value="1"/>
</dbReference>
<dbReference type="PIRSF" id="PIRSF001549">
    <property type="entry name" value="His-tRNA_synth"/>
    <property type="match status" value="1"/>
</dbReference>
<dbReference type="SUPFAM" id="SSF52954">
    <property type="entry name" value="Class II aaRS ABD-related"/>
    <property type="match status" value="1"/>
</dbReference>
<dbReference type="SUPFAM" id="SSF55681">
    <property type="entry name" value="Class II aaRS and biotin synthetases"/>
    <property type="match status" value="1"/>
</dbReference>
<dbReference type="PROSITE" id="PS50862">
    <property type="entry name" value="AA_TRNA_LIGASE_II"/>
    <property type="match status" value="1"/>
</dbReference>
<organism>
    <name type="scientific">Bartonella quintana (strain Toulouse)</name>
    <name type="common">Rochalimaea quintana</name>
    <dbReference type="NCBI Taxonomy" id="283165"/>
    <lineage>
        <taxon>Bacteria</taxon>
        <taxon>Pseudomonadati</taxon>
        <taxon>Pseudomonadota</taxon>
        <taxon>Alphaproteobacteria</taxon>
        <taxon>Hyphomicrobiales</taxon>
        <taxon>Bartonellaceae</taxon>
        <taxon>Bartonella</taxon>
    </lineage>
</organism>
<protein>
    <recommendedName>
        <fullName evidence="1">Histidine--tRNA ligase</fullName>
        <ecNumber evidence="1">6.1.1.21</ecNumber>
    </recommendedName>
    <alternativeName>
        <fullName evidence="1">Histidyl-tRNA synthetase</fullName>
        <shortName evidence="1">HisRS</shortName>
    </alternativeName>
</protein>
<evidence type="ECO:0000255" key="1">
    <source>
        <dbReference type="HAMAP-Rule" id="MF_00127"/>
    </source>
</evidence>
<reference key="1">
    <citation type="journal article" date="2004" name="Proc. Natl. Acad. Sci. U.S.A.">
        <title>The louse-borne human pathogen Bartonella quintana is a genomic derivative of the zoonotic agent Bartonella henselae.</title>
        <authorList>
            <person name="Alsmark U.C.M."/>
            <person name="Frank A.C."/>
            <person name="Karlberg E.O."/>
            <person name="Legault B.-A."/>
            <person name="Ardell D.H."/>
            <person name="Canbaeck B."/>
            <person name="Eriksson A.-S."/>
            <person name="Naeslund A.K."/>
            <person name="Handley S.A."/>
            <person name="Huvet M."/>
            <person name="La Scola B."/>
            <person name="Holmberg M."/>
            <person name="Andersson S.G.E."/>
        </authorList>
    </citation>
    <scope>NUCLEOTIDE SEQUENCE [LARGE SCALE GENOMIC DNA]</scope>
    <source>
        <strain>Toulouse</strain>
    </source>
</reference>